<comment type="function">
    <text evidence="1">Essential for normal spermatogenesis and male fertility.</text>
</comment>
<comment type="interaction">
    <interactant intactId="EBI-2837036">
        <id>Q6ZUJ4</id>
    </interactant>
    <interactant intactId="EBI-10229433">
        <id>Q13515</id>
        <label>BFSP2</label>
    </interactant>
    <organismsDiffer>false</organismsDiffer>
    <experiments>3</experiments>
</comment>
<comment type="interaction">
    <interactant intactId="EBI-2837036">
        <id>Q6ZUJ4</id>
    </interactant>
    <interactant intactId="EBI-2514791">
        <id>Q96CS2</id>
        <label>HAUS1</label>
    </interactant>
    <organismsDiffer>false</organismsDiffer>
    <experiments>4</experiments>
</comment>
<comment type="interaction">
    <interactant intactId="EBI-2837036">
        <id>Q6ZUJ4</id>
    </interactant>
    <interactant intactId="EBI-488533">
        <id>Q8WYH8</id>
        <label>ING5</label>
    </interactant>
    <organismsDiffer>false</organismsDiffer>
    <experiments>3</experiments>
</comment>
<comment type="interaction">
    <interactant intactId="EBI-2837036">
        <id>Q6ZUJ4</id>
    </interactant>
    <interactant intactId="EBI-2430095">
        <id>P12035</id>
        <label>KRT3</label>
    </interactant>
    <organismsDiffer>false</organismsDiffer>
    <experiments>3</experiments>
</comment>
<comment type="interaction">
    <interactant intactId="EBI-2837036">
        <id>Q6ZUJ4</id>
    </interactant>
    <interactant intactId="EBI-12028858">
        <id>Q8IXW0</id>
        <label>LMNTD2</label>
    </interactant>
    <organismsDiffer>false</organismsDiffer>
    <experiments>3</experiments>
</comment>
<comment type="interaction">
    <interactant intactId="EBI-2837036">
        <id>Q6ZUJ4</id>
    </interactant>
    <interactant intactId="EBI-995714">
        <id>Q9Y605</id>
        <label>MRFAP1</label>
    </interactant>
    <organismsDiffer>false</organismsDiffer>
    <experiments>3</experiments>
</comment>
<comment type="interaction">
    <interactant intactId="EBI-2837036">
        <id>Q6ZUJ4</id>
    </interactant>
    <interactant intactId="EBI-748896">
        <id>Q96HT8</id>
        <label>MRFAP1L1</label>
    </interactant>
    <organismsDiffer>false</organismsDiffer>
    <experiments>4</experiments>
</comment>
<comment type="interaction">
    <interactant intactId="EBI-2837036">
        <id>Q6ZUJ4</id>
    </interactant>
    <interactant intactId="EBI-10188956">
        <id>O75679</id>
        <label>RFPL3</label>
    </interactant>
    <organismsDiffer>false</organismsDiffer>
    <experiments>3</experiments>
</comment>
<comment type="interaction">
    <interactant intactId="EBI-2837036">
        <id>Q6ZUJ4</id>
    </interactant>
    <interactant intactId="EBI-5235340">
        <id>Q7Z699</id>
        <label>SPRED1</label>
    </interactant>
    <organismsDiffer>false</organismsDiffer>
    <experiments>3</experiments>
</comment>
<comment type="interaction">
    <interactant intactId="EBI-2837036">
        <id>Q6ZUJ4</id>
    </interactant>
    <interactant intactId="EBI-707554">
        <id>O14530</id>
        <label>TXNDC9</label>
    </interactant>
    <organismsDiffer>false</organismsDiffer>
    <experiments>3</experiments>
</comment>
<comment type="tissue specificity">
    <text evidence="2">Testis. Down-regulated in men with spermatocyte arrest.</text>
</comment>
<sequence length="267" mass="30194">MHYIKTWSLLGEMSEKLRRCRKELTAAIDRAFEGVSYSQECTGQQRLELSAAPLSFSLPVHRLLCRRHPLAACSSAAPFAAVPCAPENENPAFATNHAPVNAKPHALCPERKPLTSKENVLMHSSILAPERESWRTAGEGENWRKENLRKDMERDLKADSNMPLNNSSQEVTKDLLDMIDHTSIRTIEELAGKIEFENELNHMCGHCQDSPFKEEAWALLMDKSPQKATDADPGSLKQAFDDHNIVETVLDLEEDYNVMTSFKYQIE</sequence>
<feature type="chain" id="PRO_0000239305" description="Uncharacterized protein C3orf62">
    <location>
        <begin position="1"/>
        <end position="267"/>
    </location>
</feature>
<feature type="modified residue" description="Phosphoserine" evidence="1">
    <location>
        <position position="210"/>
    </location>
</feature>
<feature type="modified residue" description="Phosphoserine" evidence="1">
    <location>
        <position position="224"/>
    </location>
</feature>
<feature type="sequence variant" id="VAR_050724" description="In dbSNP:rs13077498.">
    <original>E</original>
    <variation>K</variation>
    <location>
        <position position="110"/>
    </location>
</feature>
<feature type="sequence conflict" description="In Ref. 2; AAH61697." evidence="3" ref="2">
    <original>A</original>
    <variation>S</variation>
    <location>
        <position position="71"/>
    </location>
</feature>
<dbReference type="EMBL" id="AK125642">
    <property type="protein sequence ID" value="BAC86231.1"/>
    <property type="molecule type" value="mRNA"/>
</dbReference>
<dbReference type="EMBL" id="BC023586">
    <property type="protein sequence ID" value="AAH23586.1"/>
    <property type="molecule type" value="mRNA"/>
</dbReference>
<dbReference type="EMBL" id="BC053629">
    <property type="protein sequence ID" value="AAH53629.2"/>
    <property type="molecule type" value="mRNA"/>
</dbReference>
<dbReference type="EMBL" id="BC061697">
    <property type="protein sequence ID" value="AAH61697.2"/>
    <property type="molecule type" value="mRNA"/>
</dbReference>
<dbReference type="CCDS" id="CCDS2792.1"/>
<dbReference type="RefSeq" id="NP_940964.1">
    <property type="nucleotide sequence ID" value="NM_198562.3"/>
</dbReference>
<dbReference type="BioGRID" id="131974">
    <property type="interactions" value="34"/>
</dbReference>
<dbReference type="FunCoup" id="Q6ZUJ4">
    <property type="interactions" value="30"/>
</dbReference>
<dbReference type="IntAct" id="Q6ZUJ4">
    <property type="interactions" value="37"/>
</dbReference>
<dbReference type="STRING" id="9606.ENSP00000341139"/>
<dbReference type="PhosphoSitePlus" id="Q6ZUJ4"/>
<dbReference type="BioMuta" id="C3orf62"/>
<dbReference type="DMDM" id="74738329"/>
<dbReference type="MassIVE" id="Q6ZUJ4"/>
<dbReference type="PaxDb" id="9606-ENSP00000341139"/>
<dbReference type="PeptideAtlas" id="Q6ZUJ4"/>
<dbReference type="ProteomicsDB" id="68333"/>
<dbReference type="Antibodypedia" id="45957">
    <property type="antibodies" value="49 antibodies from 13 providers"/>
</dbReference>
<dbReference type="DNASU" id="375341"/>
<dbReference type="Ensembl" id="ENST00000343010.8">
    <property type="protein sequence ID" value="ENSP00000341139.3"/>
    <property type="gene ID" value="ENSG00000188315.8"/>
</dbReference>
<dbReference type="GeneID" id="375341"/>
<dbReference type="KEGG" id="hsa:375341"/>
<dbReference type="MANE-Select" id="ENST00000343010.8">
    <property type="protein sequence ID" value="ENSP00000341139.3"/>
    <property type="RefSeq nucleotide sequence ID" value="NM_198562.3"/>
    <property type="RefSeq protein sequence ID" value="NP_940964.1"/>
</dbReference>
<dbReference type="UCSC" id="uc003cwn.3">
    <property type="organism name" value="human"/>
</dbReference>
<dbReference type="AGR" id="HGNC:24771"/>
<dbReference type="CTD" id="375341"/>
<dbReference type="DisGeNET" id="375341"/>
<dbReference type="GeneCards" id="C3orf62"/>
<dbReference type="HGNC" id="HGNC:24771">
    <property type="gene designation" value="C3orf62"/>
</dbReference>
<dbReference type="HPA" id="ENSG00000188315">
    <property type="expression patterns" value="Low tissue specificity"/>
</dbReference>
<dbReference type="neXtProt" id="NX_Q6ZUJ4"/>
<dbReference type="OpenTargets" id="ENSG00000188315"/>
<dbReference type="PharmGKB" id="PA143485337"/>
<dbReference type="VEuPathDB" id="HostDB:ENSG00000188315"/>
<dbReference type="eggNOG" id="ENOG502S5U4">
    <property type="taxonomic scope" value="Eukaryota"/>
</dbReference>
<dbReference type="GeneTree" id="ENSGT00390000000252"/>
<dbReference type="HOGENOM" id="CLU_091203_0_0_1"/>
<dbReference type="InParanoid" id="Q6ZUJ4"/>
<dbReference type="OMA" id="NWRKDSL"/>
<dbReference type="OrthoDB" id="9414700at2759"/>
<dbReference type="PAN-GO" id="Q6ZUJ4">
    <property type="GO annotations" value="0 GO annotations based on evolutionary models"/>
</dbReference>
<dbReference type="PhylomeDB" id="Q6ZUJ4"/>
<dbReference type="TreeFam" id="TF336411"/>
<dbReference type="PathwayCommons" id="Q6ZUJ4"/>
<dbReference type="SignaLink" id="Q6ZUJ4"/>
<dbReference type="BioGRID-ORCS" id="375341">
    <property type="hits" value="16 hits in 1132 CRISPR screens"/>
</dbReference>
<dbReference type="ChiTaRS" id="C3orf62">
    <property type="organism name" value="human"/>
</dbReference>
<dbReference type="GenomeRNAi" id="375341"/>
<dbReference type="Pharos" id="Q6ZUJ4">
    <property type="development level" value="Tdark"/>
</dbReference>
<dbReference type="PRO" id="PR:Q6ZUJ4"/>
<dbReference type="Proteomes" id="UP000005640">
    <property type="component" value="Chromosome 3"/>
</dbReference>
<dbReference type="RNAct" id="Q6ZUJ4">
    <property type="molecule type" value="protein"/>
</dbReference>
<dbReference type="Bgee" id="ENSG00000188315">
    <property type="expression patterns" value="Expressed in left testis and 116 other cell types or tissues"/>
</dbReference>
<dbReference type="ExpressionAtlas" id="Q6ZUJ4">
    <property type="expression patterns" value="baseline and differential"/>
</dbReference>
<dbReference type="GO" id="GO:0030154">
    <property type="term" value="P:cell differentiation"/>
    <property type="evidence" value="ECO:0007669"/>
    <property type="project" value="UniProtKB-KW"/>
</dbReference>
<dbReference type="GO" id="GO:0007283">
    <property type="term" value="P:spermatogenesis"/>
    <property type="evidence" value="ECO:0000250"/>
    <property type="project" value="UniProtKB"/>
</dbReference>
<dbReference type="InterPro" id="IPR031670">
    <property type="entry name" value="DUF4712"/>
</dbReference>
<dbReference type="PANTHER" id="PTHR36680">
    <property type="entry name" value="HYPOTHETICAL LOC498675"/>
    <property type="match status" value="1"/>
</dbReference>
<dbReference type="PANTHER" id="PTHR36680:SF1">
    <property type="entry name" value="HYPOTHETICAL LOC498675"/>
    <property type="match status" value="1"/>
</dbReference>
<dbReference type="Pfam" id="PF15830">
    <property type="entry name" value="DUF4712"/>
    <property type="match status" value="1"/>
</dbReference>
<gene>
    <name type="primary">C3orf62</name>
</gene>
<reference key="1">
    <citation type="journal article" date="2004" name="Nat. Genet.">
        <title>Complete sequencing and characterization of 21,243 full-length human cDNAs.</title>
        <authorList>
            <person name="Ota T."/>
            <person name="Suzuki Y."/>
            <person name="Nishikawa T."/>
            <person name="Otsuki T."/>
            <person name="Sugiyama T."/>
            <person name="Irie R."/>
            <person name="Wakamatsu A."/>
            <person name="Hayashi K."/>
            <person name="Sato H."/>
            <person name="Nagai K."/>
            <person name="Kimura K."/>
            <person name="Makita H."/>
            <person name="Sekine M."/>
            <person name="Obayashi M."/>
            <person name="Nishi T."/>
            <person name="Shibahara T."/>
            <person name="Tanaka T."/>
            <person name="Ishii S."/>
            <person name="Yamamoto J."/>
            <person name="Saito K."/>
            <person name="Kawai Y."/>
            <person name="Isono Y."/>
            <person name="Nakamura Y."/>
            <person name="Nagahari K."/>
            <person name="Murakami K."/>
            <person name="Yasuda T."/>
            <person name="Iwayanagi T."/>
            <person name="Wagatsuma M."/>
            <person name="Shiratori A."/>
            <person name="Sudo H."/>
            <person name="Hosoiri T."/>
            <person name="Kaku Y."/>
            <person name="Kodaira H."/>
            <person name="Kondo H."/>
            <person name="Sugawara M."/>
            <person name="Takahashi M."/>
            <person name="Kanda K."/>
            <person name="Yokoi T."/>
            <person name="Furuya T."/>
            <person name="Kikkawa E."/>
            <person name="Omura Y."/>
            <person name="Abe K."/>
            <person name="Kamihara K."/>
            <person name="Katsuta N."/>
            <person name="Sato K."/>
            <person name="Tanikawa M."/>
            <person name="Yamazaki M."/>
            <person name="Ninomiya K."/>
            <person name="Ishibashi T."/>
            <person name="Yamashita H."/>
            <person name="Murakawa K."/>
            <person name="Fujimori K."/>
            <person name="Tanai H."/>
            <person name="Kimata M."/>
            <person name="Watanabe M."/>
            <person name="Hiraoka S."/>
            <person name="Chiba Y."/>
            <person name="Ishida S."/>
            <person name="Ono Y."/>
            <person name="Takiguchi S."/>
            <person name="Watanabe S."/>
            <person name="Yosida M."/>
            <person name="Hotuta T."/>
            <person name="Kusano J."/>
            <person name="Kanehori K."/>
            <person name="Takahashi-Fujii A."/>
            <person name="Hara H."/>
            <person name="Tanase T.-O."/>
            <person name="Nomura Y."/>
            <person name="Togiya S."/>
            <person name="Komai F."/>
            <person name="Hara R."/>
            <person name="Takeuchi K."/>
            <person name="Arita M."/>
            <person name="Imose N."/>
            <person name="Musashino K."/>
            <person name="Yuuki H."/>
            <person name="Oshima A."/>
            <person name="Sasaki N."/>
            <person name="Aotsuka S."/>
            <person name="Yoshikawa Y."/>
            <person name="Matsunawa H."/>
            <person name="Ichihara T."/>
            <person name="Shiohata N."/>
            <person name="Sano S."/>
            <person name="Moriya S."/>
            <person name="Momiyama H."/>
            <person name="Satoh N."/>
            <person name="Takami S."/>
            <person name="Terashima Y."/>
            <person name="Suzuki O."/>
            <person name="Nakagawa S."/>
            <person name="Senoh A."/>
            <person name="Mizoguchi H."/>
            <person name="Goto Y."/>
            <person name="Shimizu F."/>
            <person name="Wakebe H."/>
            <person name="Hishigaki H."/>
            <person name="Watanabe T."/>
            <person name="Sugiyama A."/>
            <person name="Takemoto M."/>
            <person name="Kawakami B."/>
            <person name="Yamazaki M."/>
            <person name="Watanabe K."/>
            <person name="Kumagai A."/>
            <person name="Itakura S."/>
            <person name="Fukuzumi Y."/>
            <person name="Fujimori Y."/>
            <person name="Komiyama M."/>
            <person name="Tashiro H."/>
            <person name="Tanigami A."/>
            <person name="Fujiwara T."/>
            <person name="Ono T."/>
            <person name="Yamada K."/>
            <person name="Fujii Y."/>
            <person name="Ozaki K."/>
            <person name="Hirao M."/>
            <person name="Ohmori Y."/>
            <person name="Kawabata A."/>
            <person name="Hikiji T."/>
            <person name="Kobatake N."/>
            <person name="Inagaki H."/>
            <person name="Ikema Y."/>
            <person name="Okamoto S."/>
            <person name="Okitani R."/>
            <person name="Kawakami T."/>
            <person name="Noguchi S."/>
            <person name="Itoh T."/>
            <person name="Shigeta K."/>
            <person name="Senba T."/>
            <person name="Matsumura K."/>
            <person name="Nakajima Y."/>
            <person name="Mizuno T."/>
            <person name="Morinaga M."/>
            <person name="Sasaki M."/>
            <person name="Togashi T."/>
            <person name="Oyama M."/>
            <person name="Hata H."/>
            <person name="Watanabe M."/>
            <person name="Komatsu T."/>
            <person name="Mizushima-Sugano J."/>
            <person name="Satoh T."/>
            <person name="Shirai Y."/>
            <person name="Takahashi Y."/>
            <person name="Nakagawa K."/>
            <person name="Okumura K."/>
            <person name="Nagase T."/>
            <person name="Nomura N."/>
            <person name="Kikuchi H."/>
            <person name="Masuho Y."/>
            <person name="Yamashita R."/>
            <person name="Nakai K."/>
            <person name="Yada T."/>
            <person name="Nakamura Y."/>
            <person name="Ohara O."/>
            <person name="Isogai T."/>
            <person name="Sugano S."/>
        </authorList>
    </citation>
    <scope>NUCLEOTIDE SEQUENCE [LARGE SCALE MRNA]</scope>
    <source>
        <tissue>Synovial cell</tissue>
    </source>
</reference>
<reference key="2">
    <citation type="journal article" date="2004" name="Genome Res.">
        <title>The status, quality, and expansion of the NIH full-length cDNA project: the Mammalian Gene Collection (MGC).</title>
        <authorList>
            <consortium name="The MGC Project Team"/>
        </authorList>
    </citation>
    <scope>NUCLEOTIDE SEQUENCE [LARGE SCALE MRNA]</scope>
    <source>
        <tissue>Placenta</tissue>
        <tissue>PNS</tissue>
    </source>
</reference>
<reference key="3">
    <citation type="journal article" date="2020" name="Mol. Reprod. Dev.">
        <title>The testis-specific gene 1700102P08Rik is essential for male fertility.</title>
        <authorList>
            <person name="Wu X.L."/>
            <person name="Yun D.M."/>
            <person name="Gao S."/>
            <person name="Liang A.J."/>
            <person name="Duan Z.Z."/>
            <person name="Wang H.S."/>
            <person name="Wang G.S."/>
            <person name="Sun F."/>
        </authorList>
    </citation>
    <scope>TISSUE SPECIFICITY</scope>
</reference>
<evidence type="ECO:0000250" key="1">
    <source>
        <dbReference type="UniProtKB" id="Q9D9C7"/>
    </source>
</evidence>
<evidence type="ECO:0000269" key="2">
    <source>
    </source>
</evidence>
<evidence type="ECO:0000305" key="3"/>
<protein>
    <recommendedName>
        <fullName>Uncharacterized protein C3orf62</fullName>
    </recommendedName>
</protein>
<organism>
    <name type="scientific">Homo sapiens</name>
    <name type="common">Human</name>
    <dbReference type="NCBI Taxonomy" id="9606"/>
    <lineage>
        <taxon>Eukaryota</taxon>
        <taxon>Metazoa</taxon>
        <taxon>Chordata</taxon>
        <taxon>Craniata</taxon>
        <taxon>Vertebrata</taxon>
        <taxon>Euteleostomi</taxon>
        <taxon>Mammalia</taxon>
        <taxon>Eutheria</taxon>
        <taxon>Euarchontoglires</taxon>
        <taxon>Primates</taxon>
        <taxon>Haplorrhini</taxon>
        <taxon>Catarrhini</taxon>
        <taxon>Hominidae</taxon>
        <taxon>Homo</taxon>
    </lineage>
</organism>
<name>CC062_HUMAN</name>
<keyword id="KW-0221">Differentiation</keyword>
<keyword id="KW-0597">Phosphoprotein</keyword>
<keyword id="KW-1267">Proteomics identification</keyword>
<keyword id="KW-1185">Reference proteome</keyword>
<keyword id="KW-0744">Spermatogenesis</keyword>
<proteinExistence type="evidence at protein level"/>
<accession>Q6ZUJ4</accession>
<accession>Q6P7E9</accession>
<accession>Q7Z3X6</accession>